<proteinExistence type="inferred from homology"/>
<geneLocation type="mitochondrion"/>
<accession>P68527</accession>
<accession>P20599</accession>
<sequence>MRFLSTDMKDRNMLFAAITTNQPIRSKCSRLPDLHDFFPTNISQNFAITPNLDITPTPERIAGVTIVLQIEEYLGQNESEQGAVNLARTVLGARHRNGETWQGILEDIRAGGGMDNFIQNLPGAYPETPLDQFAIIPIIDLHVGNFYLSFTNEVLYMLLTVVLVVFLFFVVTKKGGGKSVPNAWQSLVELIYDFVLNLVNEQIGGLSGNVKQKFFPRISVTFTFSLFRNPQGMIPFSFTVTSHFLITLALSFSIFIGITIVGFQRHGLHFFSFLLPAGVPLPLAPFLVLLELISYCFRALSLGIRLFANMMAGHSLVKILSGFAWTMLFLNNIFYFIGDLGPLFIVLALTGLELGVAISQAHVSTISICIYLNDATNLHQNESFHN</sequence>
<protein>
    <recommendedName>
        <fullName>ATP synthase subunit a</fullName>
    </recommendedName>
    <alternativeName>
        <fullName>F-ATPase protein 6</fullName>
    </alternativeName>
</protein>
<organism>
    <name type="scientific">Triticum aestivum</name>
    <name type="common">Wheat</name>
    <dbReference type="NCBI Taxonomy" id="4565"/>
    <lineage>
        <taxon>Eukaryota</taxon>
        <taxon>Viridiplantae</taxon>
        <taxon>Streptophyta</taxon>
        <taxon>Embryophyta</taxon>
        <taxon>Tracheophyta</taxon>
        <taxon>Spermatophyta</taxon>
        <taxon>Magnoliopsida</taxon>
        <taxon>Liliopsida</taxon>
        <taxon>Poales</taxon>
        <taxon>Poaceae</taxon>
        <taxon>BOP clade</taxon>
        <taxon>Pooideae</taxon>
        <taxon>Triticodae</taxon>
        <taxon>Triticeae</taxon>
        <taxon>Triticinae</taxon>
        <taxon>Triticum</taxon>
    </lineage>
</organism>
<feature type="chain" id="PRO_0000082184" description="ATP synthase subunit a">
    <location>
        <begin position="1"/>
        <end position="386"/>
    </location>
</feature>
<feature type="transmembrane region" description="Helical" evidence="1">
    <location>
        <begin position="150"/>
        <end position="170"/>
    </location>
</feature>
<feature type="transmembrane region" description="Helical" evidence="1">
    <location>
        <begin position="243"/>
        <end position="263"/>
    </location>
</feature>
<feature type="transmembrane region" description="Helical" evidence="1">
    <location>
        <begin position="270"/>
        <end position="290"/>
    </location>
</feature>
<feature type="transmembrane region" description="Helical" evidence="1">
    <location>
        <begin position="310"/>
        <end position="330"/>
    </location>
</feature>
<dbReference type="EMBL" id="M24084">
    <property type="protein sequence ID" value="AAA70325.2"/>
    <property type="molecule type" value="Genomic_DNA"/>
</dbReference>
<dbReference type="PIR" id="JA0095">
    <property type="entry name" value="PWWT6"/>
</dbReference>
<dbReference type="RefSeq" id="YP_398396.1">
    <property type="nucleotide sequence ID" value="NC_007579.1"/>
</dbReference>
<dbReference type="RefSeq" id="YP_398403.1">
    <property type="nucleotide sequence ID" value="NC_007579.1"/>
</dbReference>
<dbReference type="SMR" id="P68527"/>
<dbReference type="PaxDb" id="4565-EPlTAEP00000010082"/>
<dbReference type="EnsemblPlants" id="TraesJUL2B03G01083180.1">
    <property type="protein sequence ID" value="TraesJUL2B03G01083180.1.CDS1"/>
    <property type="gene ID" value="TraesJUL2B03G01083180"/>
</dbReference>
<dbReference type="EnsemblPlants" id="TraesKARUn01G0159160.1">
    <property type="protein sequence ID" value="cds.TraesKARUn01G0159160.1"/>
    <property type="gene ID" value="TraesKARUn01G0159160"/>
</dbReference>
<dbReference type="EnsemblPlants" id="TraesPARA_EIv1.0_2397040.1">
    <property type="protein sequence ID" value="TraesPARA_EIv1.0_2397040.1.CDS1"/>
    <property type="gene ID" value="TraesPARA_EIv1.0_2397040"/>
</dbReference>
<dbReference type="EnsemblPlants" id="TraesPARA_EIv1.0_2397090.1">
    <property type="protein sequence ID" value="TraesPARA_EIv1.0_2397090.1.CDS1"/>
    <property type="gene ID" value="TraesPARA_EIv1.0_2397090"/>
</dbReference>
<dbReference type="EnsemblPlants" id="TraesPARA_EIv1.0_2656610.1">
    <property type="protein sequence ID" value="TraesPARA_EIv1.0_2656610.1.CDS1"/>
    <property type="gene ID" value="TraesPARA_EIv1.0_2656610"/>
</dbReference>
<dbReference type="EnsemblPlants" id="TraesPARA_EIv1.0_2672070.1">
    <property type="protein sequence ID" value="TraesPARA_EIv1.0_2672070.1.CDS1"/>
    <property type="gene ID" value="TraesPARA_EIv1.0_2672070"/>
</dbReference>
<dbReference type="EnsemblPlants" id="TraesPARA_EIv1.0_2675640.1">
    <property type="protein sequence ID" value="TraesPARA_EIv1.0_2675640.1.CDS1"/>
    <property type="gene ID" value="TraesPARA_EIv1.0_2675640"/>
</dbReference>
<dbReference type="EnsemblPlants" id="TraesPARA_EIv1.0_2675730.1">
    <property type="protein sequence ID" value="TraesPARA_EIv1.0_2675730.1.CDS1"/>
    <property type="gene ID" value="TraesPARA_EIv1.0_2675730"/>
</dbReference>
<dbReference type="EnsemblPlants" id="TraesPARA_EIv1.0_2678230.1">
    <property type="protein sequence ID" value="TraesPARA_EIv1.0_2678230.1.CDS1"/>
    <property type="gene ID" value="TraesPARA_EIv1.0_2678230"/>
</dbReference>
<dbReference type="EnsemblPlants" id="TraesRN1A0100067300.1">
    <property type="protein sequence ID" value="TraesRN1A0100067300.1"/>
    <property type="gene ID" value="TraesRN1A0100067300"/>
</dbReference>
<dbReference type="EnsemblPlants" id="TraesRN5B0100247900.1">
    <property type="protein sequence ID" value="TraesRN5B0100247900.1"/>
    <property type="gene ID" value="TraesRN5B0100247900"/>
</dbReference>
<dbReference type="EnsemblPlants" id="TraesRN5B0100248100.1">
    <property type="protein sequence ID" value="TraesRN5B0100248100.1"/>
    <property type="gene ID" value="TraesRN5B0100248100"/>
</dbReference>
<dbReference type="EnsemblPlants" id="TraesSTA2B03G00899200.1">
    <property type="protein sequence ID" value="TraesSTA2B03G00899200.1.CDS1"/>
    <property type="gene ID" value="TraesSTA2B03G00899200"/>
</dbReference>
<dbReference type="EnsemblPlants" id="TraesSTA2D03G01295380.1">
    <property type="protein sequence ID" value="TraesSTA2D03G01295380.1.CDS1"/>
    <property type="gene ID" value="TraesSTA2D03G01295380"/>
</dbReference>
<dbReference type="Gramene" id="TraesJUL2B03G01083180.1">
    <property type="protein sequence ID" value="TraesJUL2B03G01083180.1.CDS1"/>
    <property type="gene ID" value="TraesJUL2B03G01083180"/>
</dbReference>
<dbReference type="Gramene" id="TraesKARUn01G0159160.1">
    <property type="protein sequence ID" value="cds.TraesKARUn01G0159160.1"/>
    <property type="gene ID" value="TraesKARUn01G0159160"/>
</dbReference>
<dbReference type="Gramene" id="TraesPARA_EIv1.0_2397040.1">
    <property type="protein sequence ID" value="TraesPARA_EIv1.0_2397040.1.CDS1"/>
    <property type="gene ID" value="TraesPARA_EIv1.0_2397040"/>
</dbReference>
<dbReference type="Gramene" id="TraesPARA_EIv1.0_2397090.1">
    <property type="protein sequence ID" value="TraesPARA_EIv1.0_2397090.1.CDS1"/>
    <property type="gene ID" value="TraesPARA_EIv1.0_2397090"/>
</dbReference>
<dbReference type="Gramene" id="TraesPARA_EIv1.0_2656610.1">
    <property type="protein sequence ID" value="TraesPARA_EIv1.0_2656610.1.CDS1"/>
    <property type="gene ID" value="TraesPARA_EIv1.0_2656610"/>
</dbReference>
<dbReference type="Gramene" id="TraesPARA_EIv1.0_2672070.1">
    <property type="protein sequence ID" value="TraesPARA_EIv1.0_2672070.1.CDS1"/>
    <property type="gene ID" value="TraesPARA_EIv1.0_2672070"/>
</dbReference>
<dbReference type="Gramene" id="TraesPARA_EIv1.0_2675640.1">
    <property type="protein sequence ID" value="TraesPARA_EIv1.0_2675640.1.CDS1"/>
    <property type="gene ID" value="TraesPARA_EIv1.0_2675640"/>
</dbReference>
<dbReference type="Gramene" id="TraesPARA_EIv1.0_2675730.1">
    <property type="protein sequence ID" value="TraesPARA_EIv1.0_2675730.1.CDS1"/>
    <property type="gene ID" value="TraesPARA_EIv1.0_2675730"/>
</dbReference>
<dbReference type="Gramene" id="TraesPARA_EIv1.0_2678230.1">
    <property type="protein sequence ID" value="TraesPARA_EIv1.0_2678230.1.CDS1"/>
    <property type="gene ID" value="TraesPARA_EIv1.0_2678230"/>
</dbReference>
<dbReference type="Gramene" id="TraesRN1A0100067300.1">
    <property type="protein sequence ID" value="TraesRN1A0100067300.1"/>
    <property type="gene ID" value="TraesRN1A0100067300"/>
</dbReference>
<dbReference type="Gramene" id="TraesRN5B0100247900.1">
    <property type="protein sequence ID" value="TraesRN5B0100247900.1"/>
    <property type="gene ID" value="TraesRN5B0100247900"/>
</dbReference>
<dbReference type="Gramene" id="TraesRN5B0100248100.1">
    <property type="protein sequence ID" value="TraesRN5B0100248100.1"/>
    <property type="gene ID" value="TraesRN5B0100248100"/>
</dbReference>
<dbReference type="Gramene" id="TraesSTA2B03G00899200.1">
    <property type="protein sequence ID" value="TraesSTA2B03G00899200.1.CDS1"/>
    <property type="gene ID" value="TraesSTA2B03G00899200"/>
</dbReference>
<dbReference type="Gramene" id="TraesSTA2D03G01295380.1">
    <property type="protein sequence ID" value="TraesSTA2D03G01295380.1.CDS1"/>
    <property type="gene ID" value="TraesSTA2D03G01295380"/>
</dbReference>
<dbReference type="eggNOG" id="KOG4665">
    <property type="taxonomic scope" value="Eukaryota"/>
</dbReference>
<dbReference type="HOGENOM" id="CLU_041018_0_3_1"/>
<dbReference type="Proteomes" id="UP000019116">
    <property type="component" value="Unplaced"/>
</dbReference>
<dbReference type="ExpressionAtlas" id="P68527">
    <property type="expression patterns" value="baseline"/>
</dbReference>
<dbReference type="GO" id="GO:0005743">
    <property type="term" value="C:mitochondrial inner membrane"/>
    <property type="evidence" value="ECO:0007669"/>
    <property type="project" value="UniProtKB-SubCell"/>
</dbReference>
<dbReference type="GO" id="GO:0045259">
    <property type="term" value="C:proton-transporting ATP synthase complex"/>
    <property type="evidence" value="ECO:0007669"/>
    <property type="project" value="UniProtKB-KW"/>
</dbReference>
<dbReference type="GO" id="GO:0015078">
    <property type="term" value="F:proton transmembrane transporter activity"/>
    <property type="evidence" value="ECO:0007669"/>
    <property type="project" value="InterPro"/>
</dbReference>
<dbReference type="GO" id="GO:0015986">
    <property type="term" value="P:proton motive force-driven ATP synthesis"/>
    <property type="evidence" value="ECO:0007669"/>
    <property type="project" value="InterPro"/>
</dbReference>
<dbReference type="CDD" id="cd00310">
    <property type="entry name" value="ATP-synt_Fo_a_6"/>
    <property type="match status" value="1"/>
</dbReference>
<dbReference type="FunFam" id="1.20.120.220:FF:000003">
    <property type="entry name" value="ATP synthase subunit a"/>
    <property type="match status" value="1"/>
</dbReference>
<dbReference type="Gene3D" id="1.20.120.220">
    <property type="entry name" value="ATP synthase, F0 complex, subunit A"/>
    <property type="match status" value="1"/>
</dbReference>
<dbReference type="HAMAP" id="MF_01393">
    <property type="entry name" value="ATP_synth_a_bact"/>
    <property type="match status" value="1"/>
</dbReference>
<dbReference type="InterPro" id="IPR000568">
    <property type="entry name" value="ATP_synth_F0_asu"/>
</dbReference>
<dbReference type="InterPro" id="IPR023011">
    <property type="entry name" value="ATP_synth_F0_asu_AS"/>
</dbReference>
<dbReference type="InterPro" id="IPR045083">
    <property type="entry name" value="ATP_synth_F0_asu_bact/mt"/>
</dbReference>
<dbReference type="InterPro" id="IPR035908">
    <property type="entry name" value="F0_ATP_A_sf"/>
</dbReference>
<dbReference type="NCBIfam" id="TIGR01131">
    <property type="entry name" value="ATP_synt_6_or_A"/>
    <property type="match status" value="1"/>
</dbReference>
<dbReference type="NCBIfam" id="NF004482">
    <property type="entry name" value="PRK05815.2-4"/>
    <property type="match status" value="1"/>
</dbReference>
<dbReference type="PANTHER" id="PTHR11410">
    <property type="entry name" value="ATP SYNTHASE SUBUNIT A"/>
    <property type="match status" value="1"/>
</dbReference>
<dbReference type="PANTHER" id="PTHR11410:SF0">
    <property type="entry name" value="ATP SYNTHASE SUBUNIT A"/>
    <property type="match status" value="1"/>
</dbReference>
<dbReference type="Pfam" id="PF00119">
    <property type="entry name" value="ATP-synt_A"/>
    <property type="match status" value="1"/>
</dbReference>
<dbReference type="PRINTS" id="PR00123">
    <property type="entry name" value="ATPASEA"/>
</dbReference>
<dbReference type="SUPFAM" id="SSF81336">
    <property type="entry name" value="F1F0 ATP synthase subunit A"/>
    <property type="match status" value="1"/>
</dbReference>
<dbReference type="PROSITE" id="PS00449">
    <property type="entry name" value="ATPASE_A"/>
    <property type="match status" value="1"/>
</dbReference>
<reference key="1">
    <citation type="journal article" date="1988" name="Gene">
        <title>Sequence analysis of the wheat mitochondrial atp6 gene reveals a fused upstream reading frame and markedly divergent N termini among plant ATP6 proteins.</title>
        <authorList>
            <person name="Bonen L."/>
            <person name="Bird S."/>
        </authorList>
    </citation>
    <scope>NUCLEOTIDE SEQUENCE [GENOMIC DNA]</scope>
</reference>
<name>ATP6_WHEAT</name>
<keyword id="KW-0066">ATP synthesis</keyword>
<keyword id="KW-0138">CF(0)</keyword>
<keyword id="KW-0375">Hydrogen ion transport</keyword>
<keyword id="KW-0406">Ion transport</keyword>
<keyword id="KW-0472">Membrane</keyword>
<keyword id="KW-0496">Mitochondrion</keyword>
<keyword id="KW-0999">Mitochondrion inner membrane</keyword>
<keyword id="KW-1185">Reference proteome</keyword>
<keyword id="KW-0812">Transmembrane</keyword>
<keyword id="KW-1133">Transmembrane helix</keyword>
<keyword id="KW-0813">Transport</keyword>
<evidence type="ECO:0000255" key="1"/>
<evidence type="ECO:0000305" key="2"/>
<comment type="function">
    <text>Mitochondrial membrane ATP synthase (F(1)F(0) ATP synthase or Complex V) produces ATP from ADP in the presence of a proton gradient across the membrane which is generated by electron transport complexes of the respiratory chain. F-type ATPases consist of two structural domains, F(1) - containing the extramembraneous catalytic core and F(0) - containing the membrane proton channel, linked together by a central stalk and a peripheral stalk. During catalysis, ATP synthesis in the catalytic domain of F(1) is coupled via a rotary mechanism of the central stalk subunits to proton translocation. Key component of the proton channel; it may play a direct role in the translocation of protons across the membrane.</text>
</comment>
<comment type="subunit">
    <text>F-type ATPases have 2 components, CF(1) - the catalytic core - and CF(0) - the membrane proton channel. CF(1) has five subunits: alpha(3), beta(3), gamma(1), delta(1), epsilon(1). CF(0) has three main subunits: a, b and c.</text>
</comment>
<comment type="subcellular location">
    <subcellularLocation>
        <location>Mitochondrion inner membrane</location>
        <topology>Multi-pass membrane protein</topology>
    </subcellularLocation>
</comment>
<comment type="similarity">
    <text evidence="2">Belongs to the ATPase A chain family.</text>
</comment>
<gene>
    <name type="primary">ATP6</name>
</gene>